<comment type="function">
    <text evidence="1">Carrier of the growing fatty acid chain in fatty acid biosynthesis.</text>
</comment>
<comment type="pathway">
    <text evidence="1">Lipid metabolism; fatty acid biosynthesis.</text>
</comment>
<comment type="subcellular location">
    <subcellularLocation>
        <location evidence="1">Cytoplasm</location>
    </subcellularLocation>
</comment>
<comment type="PTM">
    <text evidence="1">4'-phosphopantetheine is transferred from CoA to a specific serine of apo-ACP by AcpS. This modification is essential for activity because fatty acids are bound in thioester linkage to the sulfhydryl of the prosthetic group.</text>
</comment>
<comment type="similarity">
    <text evidence="1">Belongs to the acyl carrier protein (ACP) family.</text>
</comment>
<evidence type="ECO:0000255" key="1">
    <source>
        <dbReference type="HAMAP-Rule" id="MF_01217"/>
    </source>
</evidence>
<evidence type="ECO:0000255" key="2">
    <source>
        <dbReference type="PROSITE-ProRule" id="PRU00258"/>
    </source>
</evidence>
<gene>
    <name evidence="1" type="primary">acpP</name>
    <name type="ordered locus">CT2117</name>
</gene>
<feature type="chain" id="PRO_0000180128" description="Acyl carrier protein">
    <location>
        <begin position="1"/>
        <end position="81"/>
    </location>
</feature>
<feature type="domain" description="Carrier" evidence="2">
    <location>
        <begin position="4"/>
        <end position="79"/>
    </location>
</feature>
<feature type="modified residue" description="O-(pantetheine 4'-phosphoryl)serine" evidence="2">
    <location>
        <position position="39"/>
    </location>
</feature>
<accession>Q8KAN9</accession>
<name>ACP_CHLTE</name>
<organism>
    <name type="scientific">Chlorobaculum tepidum (strain ATCC 49652 / DSM 12025 / NBRC 103806 / TLS)</name>
    <name type="common">Chlorobium tepidum</name>
    <dbReference type="NCBI Taxonomy" id="194439"/>
    <lineage>
        <taxon>Bacteria</taxon>
        <taxon>Pseudomonadati</taxon>
        <taxon>Chlorobiota</taxon>
        <taxon>Chlorobiia</taxon>
        <taxon>Chlorobiales</taxon>
        <taxon>Chlorobiaceae</taxon>
        <taxon>Chlorobaculum</taxon>
    </lineage>
</organism>
<dbReference type="EMBL" id="AE006470">
    <property type="protein sequence ID" value="AAM73333.1"/>
    <property type="molecule type" value="Genomic_DNA"/>
</dbReference>
<dbReference type="RefSeq" id="NP_662991.1">
    <property type="nucleotide sequence ID" value="NC_002932.3"/>
</dbReference>
<dbReference type="RefSeq" id="WP_010933771.1">
    <property type="nucleotide sequence ID" value="NC_002932.3"/>
</dbReference>
<dbReference type="SMR" id="Q8KAN9"/>
<dbReference type="STRING" id="194439.CT2117"/>
<dbReference type="EnsemblBacteria" id="AAM73333">
    <property type="protein sequence ID" value="AAM73333"/>
    <property type="gene ID" value="CT2117"/>
</dbReference>
<dbReference type="KEGG" id="cte:CT2117"/>
<dbReference type="PATRIC" id="fig|194439.7.peg.1918"/>
<dbReference type="eggNOG" id="COG0236">
    <property type="taxonomic scope" value="Bacteria"/>
</dbReference>
<dbReference type="HOGENOM" id="CLU_108696_5_1_10"/>
<dbReference type="OrthoDB" id="9804551at2"/>
<dbReference type="UniPathway" id="UPA00094"/>
<dbReference type="Proteomes" id="UP000001007">
    <property type="component" value="Chromosome"/>
</dbReference>
<dbReference type="GO" id="GO:0005829">
    <property type="term" value="C:cytosol"/>
    <property type="evidence" value="ECO:0007669"/>
    <property type="project" value="TreeGrafter"/>
</dbReference>
<dbReference type="GO" id="GO:0016020">
    <property type="term" value="C:membrane"/>
    <property type="evidence" value="ECO:0007669"/>
    <property type="project" value="GOC"/>
</dbReference>
<dbReference type="GO" id="GO:0000035">
    <property type="term" value="F:acyl binding"/>
    <property type="evidence" value="ECO:0007669"/>
    <property type="project" value="TreeGrafter"/>
</dbReference>
<dbReference type="GO" id="GO:0000036">
    <property type="term" value="F:acyl carrier activity"/>
    <property type="evidence" value="ECO:0007669"/>
    <property type="project" value="UniProtKB-UniRule"/>
</dbReference>
<dbReference type="GO" id="GO:0009245">
    <property type="term" value="P:lipid A biosynthetic process"/>
    <property type="evidence" value="ECO:0007669"/>
    <property type="project" value="TreeGrafter"/>
</dbReference>
<dbReference type="FunFam" id="1.10.1200.10:FF:000001">
    <property type="entry name" value="Acyl carrier protein"/>
    <property type="match status" value="1"/>
</dbReference>
<dbReference type="Gene3D" id="1.10.1200.10">
    <property type="entry name" value="ACP-like"/>
    <property type="match status" value="1"/>
</dbReference>
<dbReference type="HAMAP" id="MF_01217">
    <property type="entry name" value="Acyl_carrier"/>
    <property type="match status" value="1"/>
</dbReference>
<dbReference type="InterPro" id="IPR003231">
    <property type="entry name" value="ACP"/>
</dbReference>
<dbReference type="InterPro" id="IPR036736">
    <property type="entry name" value="ACP-like_sf"/>
</dbReference>
<dbReference type="InterPro" id="IPR009081">
    <property type="entry name" value="PP-bd_ACP"/>
</dbReference>
<dbReference type="InterPro" id="IPR006162">
    <property type="entry name" value="Ppantetheine_attach_site"/>
</dbReference>
<dbReference type="NCBIfam" id="TIGR00517">
    <property type="entry name" value="acyl_carrier"/>
    <property type="match status" value="1"/>
</dbReference>
<dbReference type="NCBIfam" id="NF002148">
    <property type="entry name" value="PRK00982.1-2"/>
    <property type="match status" value="1"/>
</dbReference>
<dbReference type="NCBIfam" id="NF002149">
    <property type="entry name" value="PRK00982.1-3"/>
    <property type="match status" value="1"/>
</dbReference>
<dbReference type="NCBIfam" id="NF002150">
    <property type="entry name" value="PRK00982.1-4"/>
    <property type="match status" value="1"/>
</dbReference>
<dbReference type="NCBIfam" id="NF002151">
    <property type="entry name" value="PRK00982.1-5"/>
    <property type="match status" value="1"/>
</dbReference>
<dbReference type="PANTHER" id="PTHR20863">
    <property type="entry name" value="ACYL CARRIER PROTEIN"/>
    <property type="match status" value="1"/>
</dbReference>
<dbReference type="PANTHER" id="PTHR20863:SF76">
    <property type="entry name" value="CARRIER DOMAIN-CONTAINING PROTEIN"/>
    <property type="match status" value="1"/>
</dbReference>
<dbReference type="Pfam" id="PF00550">
    <property type="entry name" value="PP-binding"/>
    <property type="match status" value="1"/>
</dbReference>
<dbReference type="SUPFAM" id="SSF47336">
    <property type="entry name" value="ACP-like"/>
    <property type="match status" value="1"/>
</dbReference>
<dbReference type="PROSITE" id="PS50075">
    <property type="entry name" value="CARRIER"/>
    <property type="match status" value="1"/>
</dbReference>
<dbReference type="PROSITE" id="PS00012">
    <property type="entry name" value="PHOSPHOPANTETHEINE"/>
    <property type="match status" value="1"/>
</dbReference>
<sequence length="81" mass="8975">MSAAEIKDKVYDIIVSKMGVNKDQIKPESKFADDLGADSLDTVELIMELENEFGVQIPDEDAEKIGTVQQAIDYIVNKKVS</sequence>
<keyword id="KW-0963">Cytoplasm</keyword>
<keyword id="KW-0275">Fatty acid biosynthesis</keyword>
<keyword id="KW-0276">Fatty acid metabolism</keyword>
<keyword id="KW-0444">Lipid biosynthesis</keyword>
<keyword id="KW-0443">Lipid metabolism</keyword>
<keyword id="KW-0596">Phosphopantetheine</keyword>
<keyword id="KW-0597">Phosphoprotein</keyword>
<keyword id="KW-1185">Reference proteome</keyword>
<proteinExistence type="inferred from homology"/>
<protein>
    <recommendedName>
        <fullName evidence="1">Acyl carrier protein</fullName>
        <shortName evidence="1">ACP</shortName>
    </recommendedName>
</protein>
<reference key="1">
    <citation type="journal article" date="2002" name="Proc. Natl. Acad. Sci. U.S.A.">
        <title>The complete genome sequence of Chlorobium tepidum TLS, a photosynthetic, anaerobic, green-sulfur bacterium.</title>
        <authorList>
            <person name="Eisen J.A."/>
            <person name="Nelson K.E."/>
            <person name="Paulsen I.T."/>
            <person name="Heidelberg J.F."/>
            <person name="Wu M."/>
            <person name="Dodson R.J."/>
            <person name="DeBoy R.T."/>
            <person name="Gwinn M.L."/>
            <person name="Nelson W.C."/>
            <person name="Haft D.H."/>
            <person name="Hickey E.K."/>
            <person name="Peterson J.D."/>
            <person name="Durkin A.S."/>
            <person name="Kolonay J.F."/>
            <person name="Yang F."/>
            <person name="Holt I.E."/>
            <person name="Umayam L.A."/>
            <person name="Mason T.M."/>
            <person name="Brenner M."/>
            <person name="Shea T.P."/>
            <person name="Parksey D.S."/>
            <person name="Nierman W.C."/>
            <person name="Feldblyum T.V."/>
            <person name="Hansen C.L."/>
            <person name="Craven M.B."/>
            <person name="Radune D."/>
            <person name="Vamathevan J.J."/>
            <person name="Khouri H.M."/>
            <person name="White O."/>
            <person name="Gruber T.M."/>
            <person name="Ketchum K.A."/>
            <person name="Venter J.C."/>
            <person name="Tettelin H."/>
            <person name="Bryant D.A."/>
            <person name="Fraser C.M."/>
        </authorList>
    </citation>
    <scope>NUCLEOTIDE SEQUENCE [LARGE SCALE GENOMIC DNA]</scope>
    <source>
        <strain>ATCC 49652 / DSM 12025 / NBRC 103806 / TLS</strain>
    </source>
</reference>